<name>LEXA_MYCUA</name>
<comment type="function">
    <text evidence="1">Represses a number of genes involved in the response to DNA damage (SOS response), including recA and lexA. In the presence of single-stranded DNA, RecA interacts with LexA causing an autocatalytic cleavage which disrupts the DNA-binding part of LexA, leading to derepression of the SOS regulon and eventually DNA repair.</text>
</comment>
<comment type="catalytic activity">
    <reaction evidence="1">
        <text>Hydrolysis of Ala-|-Gly bond in repressor LexA.</text>
        <dbReference type="EC" id="3.4.21.88"/>
    </reaction>
</comment>
<comment type="subunit">
    <text evidence="1">Homodimer.</text>
</comment>
<comment type="similarity">
    <text evidence="1">Belongs to the peptidase S24 family.</text>
</comment>
<evidence type="ECO:0000255" key="1">
    <source>
        <dbReference type="HAMAP-Rule" id="MF_00015"/>
    </source>
</evidence>
<evidence type="ECO:0000256" key="2">
    <source>
        <dbReference type="SAM" id="MobiDB-lite"/>
    </source>
</evidence>
<accession>A0PT76</accession>
<feature type="chain" id="PRO_1000001306" description="LexA repressor">
    <location>
        <begin position="1"/>
        <end position="244"/>
    </location>
</feature>
<feature type="DNA-binding region" description="H-T-H motif" evidence="1">
    <location>
        <begin position="58"/>
        <end position="78"/>
    </location>
</feature>
<feature type="region of interest" description="Disordered" evidence="2">
    <location>
        <begin position="1"/>
        <end position="24"/>
    </location>
</feature>
<feature type="compositionally biased region" description="Low complexity" evidence="2">
    <location>
        <begin position="10"/>
        <end position="24"/>
    </location>
</feature>
<feature type="active site" description="For autocatalytic cleavage activity" evidence="1">
    <location>
        <position position="168"/>
    </location>
</feature>
<feature type="active site" description="For autocatalytic cleavage activity" evidence="1">
    <location>
        <position position="205"/>
    </location>
</feature>
<feature type="site" description="Cleavage; by autolysis" evidence="1">
    <location>
        <begin position="133"/>
        <end position="134"/>
    </location>
</feature>
<sequence>MSDSSDTTVDGASDGASDGASGADNRAQLVDTALTERQRTILNVIRTSVNDRGYPPSIREIGDAVGLTSTSSVAHQLRTLERKGYLRRDPNRPRAVDVRGADDTVTAAPVTDVAGSDALPEPTFVPVLGRIAAGGPILAEEAVEDVFPLPRELVGQGTLFLLKVVGESMVEAAICDGDWVVVRQQNVADNGDIVAAMIDGEATVKTFKRAGGQIWLMPHNPAFDPIPGNDATVLGKVVTVIRKI</sequence>
<proteinExistence type="inferred from homology"/>
<keyword id="KW-0068">Autocatalytic cleavage</keyword>
<keyword id="KW-0227">DNA damage</keyword>
<keyword id="KW-0234">DNA repair</keyword>
<keyword id="KW-0235">DNA replication</keyword>
<keyword id="KW-0238">DNA-binding</keyword>
<keyword id="KW-0378">Hydrolase</keyword>
<keyword id="KW-0678">Repressor</keyword>
<keyword id="KW-0742">SOS response</keyword>
<keyword id="KW-0804">Transcription</keyword>
<keyword id="KW-0805">Transcription regulation</keyword>
<gene>
    <name evidence="1" type="primary">lexA</name>
    <name type="ordered locus">MUL_3363</name>
</gene>
<dbReference type="EC" id="3.4.21.88" evidence="1"/>
<dbReference type="EMBL" id="CP000325">
    <property type="protein sequence ID" value="ABL05545.1"/>
    <property type="molecule type" value="Genomic_DNA"/>
</dbReference>
<dbReference type="RefSeq" id="WP_011741153.1">
    <property type="nucleotide sequence ID" value="NC_008611.1"/>
</dbReference>
<dbReference type="SMR" id="A0PT76"/>
<dbReference type="MEROPS" id="S24.001"/>
<dbReference type="GeneID" id="93437770"/>
<dbReference type="KEGG" id="mul:MUL_3363"/>
<dbReference type="eggNOG" id="COG1974">
    <property type="taxonomic scope" value="Bacteria"/>
</dbReference>
<dbReference type="HOGENOM" id="CLU_066192_45_0_11"/>
<dbReference type="Proteomes" id="UP000000765">
    <property type="component" value="Chromosome"/>
</dbReference>
<dbReference type="GO" id="GO:0003677">
    <property type="term" value="F:DNA binding"/>
    <property type="evidence" value="ECO:0007669"/>
    <property type="project" value="UniProtKB-UniRule"/>
</dbReference>
<dbReference type="GO" id="GO:0004252">
    <property type="term" value="F:serine-type endopeptidase activity"/>
    <property type="evidence" value="ECO:0007669"/>
    <property type="project" value="UniProtKB-UniRule"/>
</dbReference>
<dbReference type="GO" id="GO:0006281">
    <property type="term" value="P:DNA repair"/>
    <property type="evidence" value="ECO:0007669"/>
    <property type="project" value="UniProtKB-UniRule"/>
</dbReference>
<dbReference type="GO" id="GO:0006260">
    <property type="term" value="P:DNA replication"/>
    <property type="evidence" value="ECO:0007669"/>
    <property type="project" value="UniProtKB-UniRule"/>
</dbReference>
<dbReference type="GO" id="GO:0045892">
    <property type="term" value="P:negative regulation of DNA-templated transcription"/>
    <property type="evidence" value="ECO:0007669"/>
    <property type="project" value="UniProtKB-UniRule"/>
</dbReference>
<dbReference type="GO" id="GO:0006508">
    <property type="term" value="P:proteolysis"/>
    <property type="evidence" value="ECO:0007669"/>
    <property type="project" value="InterPro"/>
</dbReference>
<dbReference type="GO" id="GO:0009432">
    <property type="term" value="P:SOS response"/>
    <property type="evidence" value="ECO:0007669"/>
    <property type="project" value="UniProtKB-UniRule"/>
</dbReference>
<dbReference type="CDD" id="cd06529">
    <property type="entry name" value="S24_LexA-like"/>
    <property type="match status" value="1"/>
</dbReference>
<dbReference type="FunFam" id="1.10.10.10:FF:000009">
    <property type="entry name" value="LexA repressor"/>
    <property type="match status" value="1"/>
</dbReference>
<dbReference type="FunFam" id="2.10.109.10:FF:000001">
    <property type="entry name" value="LexA repressor"/>
    <property type="match status" value="1"/>
</dbReference>
<dbReference type="Gene3D" id="2.10.109.10">
    <property type="entry name" value="Umud Fragment, subunit A"/>
    <property type="match status" value="1"/>
</dbReference>
<dbReference type="Gene3D" id="1.10.10.10">
    <property type="entry name" value="Winged helix-like DNA-binding domain superfamily/Winged helix DNA-binding domain"/>
    <property type="match status" value="1"/>
</dbReference>
<dbReference type="HAMAP" id="MF_00015">
    <property type="entry name" value="LexA"/>
    <property type="match status" value="1"/>
</dbReference>
<dbReference type="InterPro" id="IPR006200">
    <property type="entry name" value="LexA"/>
</dbReference>
<dbReference type="InterPro" id="IPR039418">
    <property type="entry name" value="LexA-like"/>
</dbReference>
<dbReference type="InterPro" id="IPR036286">
    <property type="entry name" value="LexA/Signal_pep-like_sf"/>
</dbReference>
<dbReference type="InterPro" id="IPR006199">
    <property type="entry name" value="LexA_DNA-bd_dom"/>
</dbReference>
<dbReference type="InterPro" id="IPR050077">
    <property type="entry name" value="LexA_repressor"/>
</dbReference>
<dbReference type="InterPro" id="IPR006197">
    <property type="entry name" value="Peptidase_S24_LexA"/>
</dbReference>
<dbReference type="InterPro" id="IPR015927">
    <property type="entry name" value="Peptidase_S24_S26A/B/C"/>
</dbReference>
<dbReference type="InterPro" id="IPR036388">
    <property type="entry name" value="WH-like_DNA-bd_sf"/>
</dbReference>
<dbReference type="InterPro" id="IPR036390">
    <property type="entry name" value="WH_DNA-bd_sf"/>
</dbReference>
<dbReference type="NCBIfam" id="TIGR00498">
    <property type="entry name" value="lexA"/>
    <property type="match status" value="1"/>
</dbReference>
<dbReference type="PANTHER" id="PTHR33516">
    <property type="entry name" value="LEXA REPRESSOR"/>
    <property type="match status" value="1"/>
</dbReference>
<dbReference type="PANTHER" id="PTHR33516:SF2">
    <property type="entry name" value="LEXA REPRESSOR-RELATED"/>
    <property type="match status" value="1"/>
</dbReference>
<dbReference type="Pfam" id="PF01726">
    <property type="entry name" value="LexA_DNA_bind"/>
    <property type="match status" value="1"/>
</dbReference>
<dbReference type="Pfam" id="PF00717">
    <property type="entry name" value="Peptidase_S24"/>
    <property type="match status" value="1"/>
</dbReference>
<dbReference type="PRINTS" id="PR00726">
    <property type="entry name" value="LEXASERPTASE"/>
</dbReference>
<dbReference type="SUPFAM" id="SSF51306">
    <property type="entry name" value="LexA/Signal peptidase"/>
    <property type="match status" value="1"/>
</dbReference>
<dbReference type="SUPFAM" id="SSF46785">
    <property type="entry name" value="Winged helix' DNA-binding domain"/>
    <property type="match status" value="1"/>
</dbReference>
<reference key="1">
    <citation type="journal article" date="2007" name="Genome Res.">
        <title>Reductive evolution and niche adaptation inferred from the genome of Mycobacterium ulcerans, the causative agent of Buruli ulcer.</title>
        <authorList>
            <person name="Stinear T.P."/>
            <person name="Seemann T."/>
            <person name="Pidot S."/>
            <person name="Frigui W."/>
            <person name="Reysset G."/>
            <person name="Garnier T."/>
            <person name="Meurice G."/>
            <person name="Simon D."/>
            <person name="Bouchier C."/>
            <person name="Ma L."/>
            <person name="Tichit M."/>
            <person name="Porter J.L."/>
            <person name="Ryan J."/>
            <person name="Johnson P.D.R."/>
            <person name="Davies J.K."/>
            <person name="Jenkin G.A."/>
            <person name="Small P.L.C."/>
            <person name="Jones L.M."/>
            <person name="Tekaia F."/>
            <person name="Laval F."/>
            <person name="Daffe M."/>
            <person name="Parkhill J."/>
            <person name="Cole S.T."/>
        </authorList>
    </citation>
    <scope>NUCLEOTIDE SEQUENCE [LARGE SCALE GENOMIC DNA]</scope>
    <source>
        <strain>Agy99</strain>
    </source>
</reference>
<protein>
    <recommendedName>
        <fullName evidence="1">LexA repressor</fullName>
        <ecNumber evidence="1">3.4.21.88</ecNumber>
    </recommendedName>
</protein>
<organism>
    <name type="scientific">Mycobacterium ulcerans (strain Agy99)</name>
    <dbReference type="NCBI Taxonomy" id="362242"/>
    <lineage>
        <taxon>Bacteria</taxon>
        <taxon>Bacillati</taxon>
        <taxon>Actinomycetota</taxon>
        <taxon>Actinomycetes</taxon>
        <taxon>Mycobacteriales</taxon>
        <taxon>Mycobacteriaceae</taxon>
        <taxon>Mycobacterium</taxon>
        <taxon>Mycobacterium ulcerans group</taxon>
    </lineage>
</organism>